<sequence>MELQVVGANALTVSETTFGREFNEALIHQVVVAYAAGARQGSRAQKTRAEVSGSGKKPWRQKGTGRARSGDIKSPIWRSGGVTFAAKPQDHSQKVNKKMYRGAIKSILSELVRQDRLVVVEKFEIDVPKTKVLVQKLKDMALTDALIITASLDENLFLAARNLYKVDVRDVQAIDPVSLIAFDKVVVTVDAVKQIEEMFA</sequence>
<name>RL4_HISS2</name>
<evidence type="ECO:0000255" key="1">
    <source>
        <dbReference type="HAMAP-Rule" id="MF_01328"/>
    </source>
</evidence>
<evidence type="ECO:0000256" key="2">
    <source>
        <dbReference type="SAM" id="MobiDB-lite"/>
    </source>
</evidence>
<evidence type="ECO:0000305" key="3"/>
<proteinExistence type="inferred from homology"/>
<feature type="chain" id="PRO_1000086524" description="Large ribosomal subunit protein uL4">
    <location>
        <begin position="1"/>
        <end position="200"/>
    </location>
</feature>
<feature type="region of interest" description="Disordered" evidence="2">
    <location>
        <begin position="43"/>
        <end position="71"/>
    </location>
</feature>
<gene>
    <name evidence="1" type="primary">rplD</name>
    <name type="ordered locus">HSM_1953</name>
</gene>
<organism>
    <name type="scientific">Histophilus somni (strain 2336)</name>
    <name type="common">Haemophilus somnus</name>
    <dbReference type="NCBI Taxonomy" id="228400"/>
    <lineage>
        <taxon>Bacteria</taxon>
        <taxon>Pseudomonadati</taxon>
        <taxon>Pseudomonadota</taxon>
        <taxon>Gammaproteobacteria</taxon>
        <taxon>Pasteurellales</taxon>
        <taxon>Pasteurellaceae</taxon>
        <taxon>Histophilus</taxon>
    </lineage>
</organism>
<protein>
    <recommendedName>
        <fullName evidence="1">Large ribosomal subunit protein uL4</fullName>
    </recommendedName>
    <alternativeName>
        <fullName evidence="3">50S ribosomal protein L4</fullName>
    </alternativeName>
</protein>
<comment type="function">
    <text evidence="1">One of the primary rRNA binding proteins, this protein initially binds near the 5'-end of the 23S rRNA. It is important during the early stages of 50S assembly. It makes multiple contacts with different domains of the 23S rRNA in the assembled 50S subunit and ribosome.</text>
</comment>
<comment type="function">
    <text evidence="1">Forms part of the polypeptide exit tunnel.</text>
</comment>
<comment type="subunit">
    <text evidence="1">Part of the 50S ribosomal subunit.</text>
</comment>
<comment type="similarity">
    <text evidence="1">Belongs to the universal ribosomal protein uL4 family.</text>
</comment>
<dbReference type="EMBL" id="CP000947">
    <property type="protein sequence ID" value="ACA31747.1"/>
    <property type="molecule type" value="Genomic_DNA"/>
</dbReference>
<dbReference type="RefSeq" id="WP_012341027.1">
    <property type="nucleotide sequence ID" value="NC_010519.1"/>
</dbReference>
<dbReference type="SMR" id="B0UX14"/>
<dbReference type="STRING" id="228400.HSM_1953"/>
<dbReference type="GeneID" id="31488264"/>
<dbReference type="KEGG" id="hsm:HSM_1953"/>
<dbReference type="HOGENOM" id="CLU_041575_5_2_6"/>
<dbReference type="GO" id="GO:1990904">
    <property type="term" value="C:ribonucleoprotein complex"/>
    <property type="evidence" value="ECO:0007669"/>
    <property type="project" value="UniProtKB-KW"/>
</dbReference>
<dbReference type="GO" id="GO:0005840">
    <property type="term" value="C:ribosome"/>
    <property type="evidence" value="ECO:0007669"/>
    <property type="project" value="UniProtKB-KW"/>
</dbReference>
<dbReference type="GO" id="GO:0019843">
    <property type="term" value="F:rRNA binding"/>
    <property type="evidence" value="ECO:0007669"/>
    <property type="project" value="UniProtKB-UniRule"/>
</dbReference>
<dbReference type="GO" id="GO:0003735">
    <property type="term" value="F:structural constituent of ribosome"/>
    <property type="evidence" value="ECO:0007669"/>
    <property type="project" value="InterPro"/>
</dbReference>
<dbReference type="GO" id="GO:0006412">
    <property type="term" value="P:translation"/>
    <property type="evidence" value="ECO:0007669"/>
    <property type="project" value="UniProtKB-UniRule"/>
</dbReference>
<dbReference type="FunFam" id="3.40.1370.10:FF:000001">
    <property type="entry name" value="50S ribosomal protein L4"/>
    <property type="match status" value="1"/>
</dbReference>
<dbReference type="Gene3D" id="3.40.1370.10">
    <property type="match status" value="1"/>
</dbReference>
<dbReference type="HAMAP" id="MF_01328_B">
    <property type="entry name" value="Ribosomal_uL4_B"/>
    <property type="match status" value="1"/>
</dbReference>
<dbReference type="InterPro" id="IPR002136">
    <property type="entry name" value="Ribosomal_uL4"/>
</dbReference>
<dbReference type="InterPro" id="IPR013005">
    <property type="entry name" value="Ribosomal_uL4-like"/>
</dbReference>
<dbReference type="InterPro" id="IPR023574">
    <property type="entry name" value="Ribosomal_uL4_dom_sf"/>
</dbReference>
<dbReference type="NCBIfam" id="TIGR03953">
    <property type="entry name" value="rplD_bact"/>
    <property type="match status" value="1"/>
</dbReference>
<dbReference type="PANTHER" id="PTHR10746">
    <property type="entry name" value="50S RIBOSOMAL PROTEIN L4"/>
    <property type="match status" value="1"/>
</dbReference>
<dbReference type="PANTHER" id="PTHR10746:SF6">
    <property type="entry name" value="LARGE RIBOSOMAL SUBUNIT PROTEIN UL4M"/>
    <property type="match status" value="1"/>
</dbReference>
<dbReference type="Pfam" id="PF00573">
    <property type="entry name" value="Ribosomal_L4"/>
    <property type="match status" value="1"/>
</dbReference>
<dbReference type="SUPFAM" id="SSF52166">
    <property type="entry name" value="Ribosomal protein L4"/>
    <property type="match status" value="1"/>
</dbReference>
<accession>B0UX14</accession>
<reference key="1">
    <citation type="submission" date="2008-02" db="EMBL/GenBank/DDBJ databases">
        <title>Complete sequence of Haemophilus somnus 2336.</title>
        <authorList>
            <consortium name="US DOE Joint Genome Institute"/>
            <person name="Siddaramappa S."/>
            <person name="Duncan A.J."/>
            <person name="Challacombe J.F."/>
            <person name="Rainey D."/>
            <person name="Gillaspy A.F."/>
            <person name="Carson M."/>
            <person name="Gipson J."/>
            <person name="Gipson M."/>
            <person name="Bruce D."/>
            <person name="Detter J.C."/>
            <person name="Han C.S."/>
            <person name="Land M."/>
            <person name="Tapia R."/>
            <person name="Thompson L.S."/>
            <person name="Orvis J."/>
            <person name="Zaitshik J."/>
            <person name="Barnes G."/>
            <person name="Brettin T.S."/>
            <person name="Dyer D.W."/>
            <person name="Inzana T.J."/>
        </authorList>
    </citation>
    <scope>NUCLEOTIDE SEQUENCE [LARGE SCALE GENOMIC DNA]</scope>
    <source>
        <strain>2336</strain>
    </source>
</reference>
<keyword id="KW-0687">Ribonucleoprotein</keyword>
<keyword id="KW-0689">Ribosomal protein</keyword>
<keyword id="KW-0694">RNA-binding</keyword>
<keyword id="KW-0699">rRNA-binding</keyword>